<organism>
    <name type="scientific">Neisseria meningitidis serogroup B / serotype 15 (strain H44/76)</name>
    <dbReference type="NCBI Taxonomy" id="909420"/>
    <lineage>
        <taxon>Bacteria</taxon>
        <taxon>Pseudomonadati</taxon>
        <taxon>Pseudomonadota</taxon>
        <taxon>Betaproteobacteria</taxon>
        <taxon>Neisseriales</taxon>
        <taxon>Neisseriaceae</taxon>
        <taxon>Neisseria</taxon>
    </lineage>
</organism>
<accession>F0MIT7</accession>
<accession>E6MWH0</accession>
<reference key="1">
    <citation type="submission" date="2010-12" db="EMBL/GenBank/DDBJ databases">
        <title>Genome Sequence of Neisseria meningitidis serogroup B strain H44/76.</title>
        <authorList>
            <person name="Piet J.R."/>
            <person name="Huis in 't Veld R."/>
            <person name="van Schaik B."/>
            <person name="van Kampen A."/>
            <person name="Baas F."/>
            <person name="van de Beek D."/>
            <person name="Pannekoek Y."/>
            <person name="van der Ende A."/>
        </authorList>
    </citation>
    <scope>NUCLEOTIDE SEQUENCE [LARGE SCALE GENOMIC DNA]</scope>
    <source>
        <strain>H44/76</strain>
    </source>
</reference>
<reference key="2">
    <citation type="journal article" date="2011" name="Proc. Natl. Acad. Sci. U.S.A.">
        <title>Neisseria meningitidis is structured in clades associated with restriction modification systems that modulate homologous recombination.</title>
        <authorList>
            <person name="Budroni S."/>
            <person name="Siena E."/>
            <person name="Hotopp J.C."/>
            <person name="Seib K.L."/>
            <person name="Serruto D."/>
            <person name="Nofroni C."/>
            <person name="Comanducci M."/>
            <person name="Riley D.R."/>
            <person name="Daugherty S.C."/>
            <person name="Angiuoli S.V."/>
            <person name="Covacci A."/>
            <person name="Pizza M."/>
            <person name="Rappuoli R."/>
            <person name="Moxon E.R."/>
            <person name="Tettelin H."/>
            <person name="Medini D."/>
        </authorList>
    </citation>
    <scope>NUCLEOTIDE SEQUENCE [LARGE SCALE GENOMIC DNA]</scope>
    <source>
        <strain>H44/76</strain>
    </source>
</reference>
<reference key="3">
    <citation type="journal article" date="2004" name="Proc. Natl. Acad. Sci. U.S.A.">
        <title>Identification of an outer membrane protein required for the transport of lipopolysaccharide to the bacterial cell surface.</title>
        <authorList>
            <person name="Bos M.P."/>
            <person name="Tefsen B."/>
            <person name="Geurtsen J."/>
            <person name="Tommassen J."/>
        </authorList>
    </citation>
    <scope>FUNCTION</scope>
    <scope>SUBCELLULAR LOCATION</scope>
    <source>
        <strain>H44/76</strain>
    </source>
</reference>
<feature type="signal peptide" evidence="1">
    <location>
        <begin position="1"/>
        <end position="25"/>
    </location>
</feature>
<feature type="chain" id="PRO_0000411118" description="LPS-assembly protein LptD">
    <location>
        <begin position="26"/>
        <end position="802"/>
    </location>
</feature>
<comment type="function">
    <text evidence="1 2">Together with LptE, is involved in the assembly of lipopolysaccharide (LPS) at the surface of the outer membrane. Determines N-hexane tolerance and is involved in outer membrane permeability. Essential for envelope biogenesis.</text>
</comment>
<comment type="subunit">
    <text evidence="1">Component of the lipopolysaccharide transport and assembly complex. Interacts with LptE and LptA.</text>
</comment>
<comment type="subcellular location">
    <subcellularLocation>
        <location evidence="1 2">Cell outer membrane</location>
    </subcellularLocation>
</comment>
<comment type="similarity">
    <text evidence="1">Belongs to the LptD family.</text>
</comment>
<comment type="sequence caution" evidence="3">
    <conflict type="erroneous initiation">
        <sequence resource="EMBL-CDS" id="ADY94939"/>
    </conflict>
    <text>Truncated N-terminus.</text>
</comment>
<proteinExistence type="inferred from homology"/>
<name>LPTD_NEIMH</name>
<dbReference type="EMBL" id="AEQZ01000016">
    <property type="protein sequence ID" value="EFV64164.1"/>
    <property type="molecule type" value="Genomic_DNA"/>
</dbReference>
<dbReference type="EMBL" id="CP002420">
    <property type="protein sequence ID" value="ADY94939.1"/>
    <property type="status" value="ALT_INIT"/>
    <property type="molecule type" value="Genomic_DNA"/>
</dbReference>
<dbReference type="RefSeq" id="WP_002243965.1">
    <property type="nucleotide sequence ID" value="NZ_AEQZ01000016.1"/>
</dbReference>
<dbReference type="SMR" id="F0MIT7"/>
<dbReference type="KEGG" id="nmh:NMBH4476_0275"/>
<dbReference type="PATRIC" id="fig|909420.3.peg.350"/>
<dbReference type="HOGENOM" id="CLU_009039_0_0_4"/>
<dbReference type="Proteomes" id="UP000032707">
    <property type="component" value="Unassembled WGS sequence"/>
</dbReference>
<dbReference type="GO" id="GO:0009279">
    <property type="term" value="C:cell outer membrane"/>
    <property type="evidence" value="ECO:0007669"/>
    <property type="project" value="UniProtKB-SubCell"/>
</dbReference>
<dbReference type="GO" id="GO:1990351">
    <property type="term" value="C:transporter complex"/>
    <property type="evidence" value="ECO:0007669"/>
    <property type="project" value="TreeGrafter"/>
</dbReference>
<dbReference type="GO" id="GO:0043165">
    <property type="term" value="P:Gram-negative-bacterium-type cell outer membrane assembly"/>
    <property type="evidence" value="ECO:0007669"/>
    <property type="project" value="UniProtKB-UniRule"/>
</dbReference>
<dbReference type="GO" id="GO:0015920">
    <property type="term" value="P:lipopolysaccharide transport"/>
    <property type="evidence" value="ECO:0007669"/>
    <property type="project" value="InterPro"/>
</dbReference>
<dbReference type="Gene3D" id="2.60.450.10">
    <property type="entry name" value="Lipopolysaccharide (LPS) transport protein A like domain"/>
    <property type="match status" value="1"/>
</dbReference>
<dbReference type="HAMAP" id="MF_01411">
    <property type="entry name" value="LPS_assembly_LptD"/>
    <property type="match status" value="1"/>
</dbReference>
<dbReference type="InterPro" id="IPR020889">
    <property type="entry name" value="LipoPS_assembly_LptD"/>
</dbReference>
<dbReference type="InterPro" id="IPR050218">
    <property type="entry name" value="LptD"/>
</dbReference>
<dbReference type="InterPro" id="IPR007543">
    <property type="entry name" value="LptD_C"/>
</dbReference>
<dbReference type="PANTHER" id="PTHR30189">
    <property type="entry name" value="LPS-ASSEMBLY PROTEIN"/>
    <property type="match status" value="1"/>
</dbReference>
<dbReference type="PANTHER" id="PTHR30189:SF1">
    <property type="entry name" value="LPS-ASSEMBLY PROTEIN LPTD"/>
    <property type="match status" value="1"/>
</dbReference>
<dbReference type="Pfam" id="PF04453">
    <property type="entry name" value="LptD"/>
    <property type="match status" value="1"/>
</dbReference>
<protein>
    <recommendedName>
        <fullName evidence="1">LPS-assembly protein LptD</fullName>
    </recommendedName>
    <alternativeName>
        <fullName>Organic solvent tolerance protein</fullName>
    </alternativeName>
</protein>
<gene>
    <name evidence="1" type="primary">lptD</name>
    <name type="synonym">ostA</name>
    <name type="ordered locus">NMBH4476_0275</name>
    <name type="ORF">NMH_1010</name>
</gene>
<sequence length="802" mass="88693">MARLFSLKPLVLALGLCFGTHCAAADAVAAEETDNPTAGESVRSVSEPIQPTSLSLGSTCLFCSNESGSPERTEAAVQGSGEASIPEDYTRIVADRMEGQSQVQVRAEGNVVVERNRTTLNTDWADYDQSGDTVTAGDRFALQQDGTLIRGETLTYNLEQQTGEAHNVRMEIEQGGRRLQSVSRTAEMLGEGHYKLTETQFNTCSAGDAGWYVKAASVEADREKGIGVAKHAAFVFGGVPIFYTPWADFPLDGNRKSGLLVPSLSAGSDGVSLSVPYYFNLAPNLDATFAPSVIGERGAVFDGQVRYLRPDYAGQSDLTWLPHDKKSGRNNRYQAKWQHRHDISDTLQAGVDFNQVSDSGYYRDFYGNKEIAGNVNLNRRVWLDYGGRAAGGSLNAGLSVLKYQTLANQSGYKDKPYALMPRLSVEWRKNTGRAQIGVSAQFTRFSHDSRQDGSRLVVYPDIKWDFSNSWGYVRPKLGLHATYYSLNRFGSQEARRVSRTLPIVNIDSGATFERNTRMFGGEVLQTLEPRLFYNYIPAKSQNDLPNFDSSESSFGYGQLFRENLYYGNDRINTANSLSAAVQSRILDGATGEERFRAGIGQKFYFKDDAVMLDGSVGKKPRNRSDWVAFASGSIGSRFILDSSIHYNQNDKRAENYAVGASYRPAQGKVLNARYKYGRNEKIYLKSDGSYFYDKLSQLDLSAQWPLTRNLSAVVRYNYGFEAKKPIEVLAGAEYKSSCGCWGAGVYAQRYVTGENTYKNAVFFSLQLKDLSSVGRNPADRMDVAVPGYITAHSLSAGRNKRP</sequence>
<keyword id="KW-0998">Cell outer membrane</keyword>
<keyword id="KW-0472">Membrane</keyword>
<keyword id="KW-0732">Signal</keyword>
<evidence type="ECO:0000255" key="1">
    <source>
        <dbReference type="HAMAP-Rule" id="MF_01411"/>
    </source>
</evidence>
<evidence type="ECO:0000269" key="2">
    <source>
    </source>
</evidence>
<evidence type="ECO:0000305" key="3"/>